<sequence>MVVKKRKLATEAGGSDERPKYLPGKHPKNQEKTPHVDYNAPLNPKSELFLDDWHIPKFNRFISFTLDVLIDKYKDIFKDFIKLPSRKFHPQYYYKIQQPMSINEIKSRDYEYEDGPSNFLLDVELLTKNCQAYNEYDSLIVKNSMQVVMLIEFEVLKAKNLKRNYLINSEVKAKLLHYLNKLVDATEKKINQALLGASSPKNLDDKVKLSEPFMELVDKDELPEYYEIVHSPMALSIVKQNLEIGQYSKIYDFIIDMLLVFQNAHIFNDPSALIYKDATTLTNYFNYLIQKEFFPELQDLNERGEINLEFDKFEFENYLAIGGGGPAAAGALAISALDNDIEPESNREDLIDQADYDFNHFEGLGNGYNRSLLTEDYLLNPNNFKKLIAKPETVQSEVKNERSTTSDIEKTNSLESEHLKIPKYNVIKSMQKEMQSLSEQHTMEYKPYKLIQQIYIFSSKNLYSQATKPLLGSRPSCNQNWVEYIFNGNELSQNENAFSFMLQPMQTFLTLQSHLTSSLKDTETLLTINKEPVKSRTSNVNSNLSQPQQQENDVIGNDTKQDIENLTIGGGNNNDIVGNDNDKRNNITEIFDIRLSEGLNHLMFRCEDKISHETEFMNFWINVLP</sequence>
<proteinExistence type="evidence at protein level"/>
<reference key="1">
    <citation type="journal article" date="1992" name="Yeast">
        <title>DNA sequencing and analysis of a 24.7 kb segment encompassing centromere CEN11 of Saccharomyces cerevisiae reveals nine previously unknown open reading frames.</title>
        <authorList>
            <person name="Duesterhoeft A."/>
            <person name="Philippsen P."/>
        </authorList>
    </citation>
    <scope>NUCLEOTIDE SEQUENCE [GENOMIC DNA]</scope>
    <source>
        <strain>ATCC 204508 / S288c</strain>
    </source>
</reference>
<reference key="2">
    <citation type="journal article" date="1994" name="Nature">
        <title>Complete DNA sequence of yeast chromosome XI.</title>
        <authorList>
            <person name="Dujon B."/>
            <person name="Alexandraki D."/>
            <person name="Andre B."/>
            <person name="Ansorge W."/>
            <person name="Baladron V."/>
            <person name="Ballesta J.P.G."/>
            <person name="Banrevi A."/>
            <person name="Bolle P.-A."/>
            <person name="Bolotin-Fukuhara M."/>
            <person name="Bossier P."/>
            <person name="Bou G."/>
            <person name="Boyer J."/>
            <person name="Buitrago M.J."/>
            <person name="Cheret G."/>
            <person name="Colleaux L."/>
            <person name="Daignan-Fornier B."/>
            <person name="del Rey F."/>
            <person name="Dion C."/>
            <person name="Domdey H."/>
            <person name="Duesterhoeft A."/>
            <person name="Duesterhus S."/>
            <person name="Entian K.-D."/>
            <person name="Erfle H."/>
            <person name="Esteban P.F."/>
            <person name="Feldmann H."/>
            <person name="Fernandes L."/>
            <person name="Fobo G.M."/>
            <person name="Fritz C."/>
            <person name="Fukuhara H."/>
            <person name="Gabel C."/>
            <person name="Gaillon L."/>
            <person name="Garcia-Cantalejo J.M."/>
            <person name="Garcia-Ramirez J.J."/>
            <person name="Gent M.E."/>
            <person name="Ghazvini M."/>
            <person name="Goffeau A."/>
            <person name="Gonzalez A."/>
            <person name="Grothues D."/>
            <person name="Guerreiro P."/>
            <person name="Hegemann J.H."/>
            <person name="Hewitt N."/>
            <person name="Hilger F."/>
            <person name="Hollenberg C.P."/>
            <person name="Horaitis O."/>
            <person name="Indge K.J."/>
            <person name="Jacquier A."/>
            <person name="James C.M."/>
            <person name="Jauniaux J.-C."/>
            <person name="Jimenez A."/>
            <person name="Keuchel H."/>
            <person name="Kirchrath L."/>
            <person name="Kleine K."/>
            <person name="Koetter P."/>
            <person name="Legrain P."/>
            <person name="Liebl S."/>
            <person name="Louis E.J."/>
            <person name="Maia e Silva A."/>
            <person name="Marck C."/>
            <person name="Monnier A.-L."/>
            <person name="Moestl D."/>
            <person name="Mueller S."/>
            <person name="Obermaier B."/>
            <person name="Oliver S.G."/>
            <person name="Pallier C."/>
            <person name="Pascolo S."/>
            <person name="Pfeiffer F."/>
            <person name="Philippsen P."/>
            <person name="Planta R.J."/>
            <person name="Pohl F.M."/>
            <person name="Pohl T.M."/>
            <person name="Poehlmann R."/>
            <person name="Portetelle D."/>
            <person name="Purnelle B."/>
            <person name="Puzos V."/>
            <person name="Ramezani Rad M."/>
            <person name="Rasmussen S.W."/>
            <person name="Remacha M.A."/>
            <person name="Revuelta J.L."/>
            <person name="Richard G.-F."/>
            <person name="Rieger M."/>
            <person name="Rodrigues-Pousada C."/>
            <person name="Rose M."/>
            <person name="Rupp T."/>
            <person name="Santos M.A."/>
            <person name="Schwager C."/>
            <person name="Sensen C."/>
            <person name="Skala J."/>
            <person name="Soares H."/>
            <person name="Sor F."/>
            <person name="Stegemann J."/>
            <person name="Tettelin H."/>
            <person name="Thierry A."/>
            <person name="Tzermia M."/>
            <person name="Urrestarazu L.A."/>
            <person name="van Dyck L."/>
            <person name="van Vliet-Reedijk J.C."/>
            <person name="Valens M."/>
            <person name="Vandenbol M."/>
            <person name="Vilela C."/>
            <person name="Vissers S."/>
            <person name="von Wettstein D."/>
            <person name="Voss H."/>
            <person name="Wiemann S."/>
            <person name="Xu G."/>
            <person name="Zimmermann J."/>
            <person name="Haasemann M."/>
            <person name="Becker I."/>
            <person name="Mewes H.-W."/>
        </authorList>
    </citation>
    <scope>NUCLEOTIDE SEQUENCE [LARGE SCALE GENOMIC DNA]</scope>
    <source>
        <strain>ATCC 204508 / S288c</strain>
    </source>
</reference>
<reference key="3">
    <citation type="journal article" date="2014" name="G3 (Bethesda)">
        <title>The reference genome sequence of Saccharomyces cerevisiae: Then and now.</title>
        <authorList>
            <person name="Engel S.R."/>
            <person name="Dietrich F.S."/>
            <person name="Fisk D.G."/>
            <person name="Binkley G."/>
            <person name="Balakrishnan R."/>
            <person name="Costanzo M.C."/>
            <person name="Dwight S.S."/>
            <person name="Hitz B.C."/>
            <person name="Karra K."/>
            <person name="Nash R.S."/>
            <person name="Weng S."/>
            <person name="Wong E.D."/>
            <person name="Lloyd P."/>
            <person name="Skrzypek M.S."/>
            <person name="Miyasato S.R."/>
            <person name="Simison M."/>
            <person name="Cherry J.M."/>
        </authorList>
    </citation>
    <scope>GENOME REANNOTATION</scope>
    <scope>SEQUENCE REVISION TO 390</scope>
    <source>
        <strain>ATCC 204508 / S288c</strain>
    </source>
</reference>
<reference key="4">
    <citation type="journal article" date="2007" name="Genome Res.">
        <title>Approaching a complete repository of sequence-verified protein-encoding clones for Saccharomyces cerevisiae.</title>
        <authorList>
            <person name="Hu Y."/>
            <person name="Rolfs A."/>
            <person name="Bhullar B."/>
            <person name="Murthy T.V.S."/>
            <person name="Zhu C."/>
            <person name="Berger M.F."/>
            <person name="Camargo A.A."/>
            <person name="Kelley F."/>
            <person name="McCarron S."/>
            <person name="Jepson D."/>
            <person name="Richardson A."/>
            <person name="Raphael J."/>
            <person name="Moreira D."/>
            <person name="Taycher E."/>
            <person name="Zuo D."/>
            <person name="Mohr S."/>
            <person name="Kane M.F."/>
            <person name="Williamson J."/>
            <person name="Simpson A.J.G."/>
            <person name="Bulyk M.L."/>
            <person name="Harlow E."/>
            <person name="Marsischky G."/>
            <person name="Kolodner R.D."/>
            <person name="LaBaer J."/>
        </authorList>
    </citation>
    <scope>NUCLEOTIDE SEQUENCE [GENOMIC DNA]</scope>
    <source>
        <strain>ATCC 204508 / S288c</strain>
    </source>
</reference>
<reference key="5">
    <citation type="journal article" date="1996" name="Cell">
        <title>RSC, an essential, abundant chromatin-remodeling complex.</title>
        <authorList>
            <person name="Cairns B.R."/>
            <person name="Lorch Y."/>
            <person name="Li Y."/>
            <person name="Zhang M."/>
            <person name="Lacomis L."/>
            <person name="Erdjument-Bromage H."/>
            <person name="Tempst P."/>
            <person name="Du J."/>
            <person name="Laurent B.C."/>
            <person name="Kornberg R.D."/>
        </authorList>
    </citation>
    <scope>FUNCTION OF THE RSC COMPLEX</scope>
    <scope>COMPOSITION OF THE RSC COMPLEX</scope>
</reference>
<reference key="6">
    <citation type="journal article" date="1999" name="Cell">
        <title>Histone octamer transfer by a chromatin-remodeling complex.</title>
        <authorList>
            <person name="Lorch Y."/>
            <person name="Zhang M."/>
            <person name="Kornberg R.D."/>
        </authorList>
    </citation>
    <scope>FUNCTION OF THE RSC COMPLEX</scope>
</reference>
<reference key="7">
    <citation type="journal article" date="1999" name="EMBO J.">
        <title>Transcriptional repression of the yeast CHA1 gene requires the chromatin-remodeling complex RSC.</title>
        <authorList>
            <person name="Moreira J.M.A."/>
            <person name="Holmberg S."/>
        </authorList>
    </citation>
    <scope>FUNCTION OF THE RSC COMPLEX</scope>
</reference>
<reference key="8">
    <citation type="journal article" date="1999" name="Mol. Cell">
        <title>Two functionally distinct forms of the RSC nucleosome-remodeling complex, containing essential AT hook, BAH, and bromodomains.</title>
        <authorList>
            <person name="Cairns B.R."/>
            <person name="Schlichter A."/>
            <person name="Erdjument-Bromage H."/>
            <person name="Tempst P."/>
            <person name="Kornberg R.D."/>
            <person name="Winston F."/>
        </authorList>
    </citation>
    <scope>COMPOSITION OF THE RSC COMPLEX</scope>
</reference>
<reference key="9">
    <citation type="journal article" date="2002" name="Genes Dev.">
        <title>Chromatin remodeling by RSC involves ATP-dependent DNA translocation.</title>
        <authorList>
            <person name="Saha A."/>
            <person name="Wittmeyer J."/>
            <person name="Cairns B.R."/>
        </authorList>
    </citation>
    <scope>FUNCTION OF THE RSC COMPLEX</scope>
</reference>
<reference key="10">
    <citation type="journal article" date="2002" name="Genetics">
        <title>Yeast RSC function is required for organization of the cellular cytoskeleton via an alternative PKC1 pathway.</title>
        <authorList>
            <person name="Chai B."/>
            <person name="Hsu J.-M."/>
            <person name="Du J."/>
            <person name="Laurent B.C."/>
        </authorList>
    </citation>
    <scope>FUNCTION OF THE RSC COMPLEX</scope>
</reference>
<reference key="11">
    <citation type="journal article" date="2003" name="Mol. Cell. Biol.">
        <title>The yeast RSC chromatin-remodeling complex is required for kinetochore function in chromosome segregation.</title>
        <authorList>
            <person name="Hsu J.-M."/>
            <person name="Huang J."/>
            <person name="Meluh P.B."/>
            <person name="Laurent B.C."/>
        </authorList>
    </citation>
    <scope>FUNCTION OF THE RSC COMPLEX</scope>
    <scope>SUBCELLULAR LOCATION</scope>
    <scope>INTERACTION OF THE RSC COMPLEX WITH HISTONES</scope>
</reference>
<reference key="12">
    <citation type="journal article" date="2003" name="Nature">
        <title>Global analysis of protein localization in budding yeast.</title>
        <authorList>
            <person name="Huh W.-K."/>
            <person name="Falvo J.V."/>
            <person name="Gerke L.C."/>
            <person name="Carroll A.S."/>
            <person name="Howson R.W."/>
            <person name="Weissman J.S."/>
            <person name="O'Shea E.K."/>
        </authorList>
    </citation>
    <scope>SUBCELLULAR LOCATION [LARGE SCALE ANALYSIS]</scope>
</reference>
<reference key="13">
    <citation type="journal article" date="2003" name="Nature">
        <title>Global analysis of protein expression in yeast.</title>
        <authorList>
            <person name="Ghaemmaghami S."/>
            <person name="Huh W.-K."/>
            <person name="Bower K."/>
            <person name="Howson R.W."/>
            <person name="Belle A."/>
            <person name="Dephoure N."/>
            <person name="O'Shea E.K."/>
            <person name="Weissman J.S."/>
        </authorList>
    </citation>
    <scope>LEVEL OF PROTEIN EXPRESSION [LARGE SCALE ANALYSIS]</scope>
</reference>
<reference key="14">
    <citation type="journal article" date="2007" name="J. Proteome Res.">
        <title>Large-scale phosphorylation analysis of alpha-factor-arrested Saccharomyces cerevisiae.</title>
        <authorList>
            <person name="Li X."/>
            <person name="Gerber S.A."/>
            <person name="Rudner A.D."/>
            <person name="Beausoleil S.A."/>
            <person name="Haas W."/>
            <person name="Villen J."/>
            <person name="Elias J.E."/>
            <person name="Gygi S.P."/>
        </authorList>
    </citation>
    <scope>IDENTIFICATION BY MASS SPECTROMETRY [LARGE SCALE ANALYSIS]</scope>
    <source>
        <strain>ADR376</strain>
    </source>
</reference>
<reference key="15">
    <citation type="journal article" date="2007" name="Proc. Natl. Acad. Sci. U.S.A.">
        <title>Analysis of phosphorylation sites on proteins from Saccharomyces cerevisiae by electron transfer dissociation (ETD) mass spectrometry.</title>
        <authorList>
            <person name="Chi A."/>
            <person name="Huttenhower C."/>
            <person name="Geer L.Y."/>
            <person name="Coon J.J."/>
            <person name="Syka J.E.P."/>
            <person name="Bai D.L."/>
            <person name="Shabanowitz J."/>
            <person name="Burke D.J."/>
            <person name="Troyanskaya O.G."/>
            <person name="Hunt D.F."/>
        </authorList>
    </citation>
    <scope>IDENTIFICATION BY MASS SPECTROMETRY [LARGE SCALE ANALYSIS]</scope>
</reference>
<reference key="16">
    <citation type="journal article" date="2008" name="Mol. Cell. Proteomics">
        <title>A multidimensional chromatography technology for in-depth phosphoproteome analysis.</title>
        <authorList>
            <person name="Albuquerque C.P."/>
            <person name="Smolka M.B."/>
            <person name="Payne S.H."/>
            <person name="Bafna V."/>
            <person name="Eng J."/>
            <person name="Zhou H."/>
        </authorList>
    </citation>
    <scope>PHOSPHORYLATION [LARGE SCALE ANALYSIS] AT SER-545</scope>
    <scope>IDENTIFICATION BY MASS SPECTROMETRY [LARGE SCALE ANALYSIS]</scope>
</reference>
<reference key="17">
    <citation type="journal article" date="2009" name="Science">
        <title>Global analysis of Cdk1 substrate phosphorylation sites provides insights into evolution.</title>
        <authorList>
            <person name="Holt L.J."/>
            <person name="Tuch B.B."/>
            <person name="Villen J."/>
            <person name="Johnson A.D."/>
            <person name="Gygi S.P."/>
            <person name="Morgan D.O."/>
        </authorList>
    </citation>
    <scope>PHOSPHORYLATION [LARGE SCALE ANALYSIS] AT SER-199</scope>
    <scope>IDENTIFICATION BY MASS SPECTROMETRY [LARGE SCALE ANALYSIS]</scope>
</reference>
<dbReference type="EMBL" id="X65124">
    <property type="protein sequence ID" value="CAA46244.1"/>
    <property type="molecule type" value="Genomic_DNA"/>
</dbReference>
<dbReference type="EMBL" id="Z28233">
    <property type="protein sequence ID" value="CAA82078.1"/>
    <property type="molecule type" value="Genomic_DNA"/>
</dbReference>
<dbReference type="EMBL" id="AY693123">
    <property type="protein sequence ID" value="AAT93142.1"/>
    <property type="molecule type" value="Genomic_DNA"/>
</dbReference>
<dbReference type="EMBL" id="BK006944">
    <property type="protein sequence ID" value="DAA09164.2"/>
    <property type="molecule type" value="Genomic_DNA"/>
</dbReference>
<dbReference type="PIR" id="S34035">
    <property type="entry name" value="S34035"/>
</dbReference>
<dbReference type="RefSeq" id="NP_012933.4">
    <property type="nucleotide sequence ID" value="NM_001179798.4"/>
</dbReference>
<dbReference type="PDB" id="2R0S">
    <property type="method" value="X-ray"/>
    <property type="resolution" value="1.80 A"/>
    <property type="chains" value="A=36-320"/>
</dbReference>
<dbReference type="PDB" id="2R0V">
    <property type="method" value="X-ray"/>
    <property type="resolution" value="2.35 A"/>
    <property type="chains" value="A/B/C=1-340"/>
</dbReference>
<dbReference type="PDB" id="2R0Y">
    <property type="method" value="X-ray"/>
    <property type="resolution" value="1.75 A"/>
    <property type="chains" value="A=36-340"/>
</dbReference>
<dbReference type="PDB" id="2R10">
    <property type="method" value="X-ray"/>
    <property type="resolution" value="2.20 A"/>
    <property type="chains" value="A/B=1-340"/>
</dbReference>
<dbReference type="PDB" id="6K15">
    <property type="method" value="EM"/>
    <property type="resolution" value="3.40 A"/>
    <property type="chains" value="X=1-625"/>
</dbReference>
<dbReference type="PDB" id="6KW3">
    <property type="method" value="EM"/>
    <property type="resolution" value="7.13 A"/>
    <property type="chains" value="X=1-625"/>
</dbReference>
<dbReference type="PDB" id="6KW4">
    <property type="method" value="EM"/>
    <property type="resolution" value="7.55 A"/>
    <property type="chains" value="X=1-625"/>
</dbReference>
<dbReference type="PDB" id="6KW5">
    <property type="method" value="EM"/>
    <property type="resolution" value="10.13 A"/>
    <property type="chains" value="X=1-625"/>
</dbReference>
<dbReference type="PDB" id="6TDA">
    <property type="method" value="EM"/>
    <property type="resolution" value="15.00 A"/>
    <property type="chains" value="R=1-625"/>
</dbReference>
<dbReference type="PDB" id="6V8O">
    <property type="method" value="EM"/>
    <property type="resolution" value="3.07 A"/>
    <property type="chains" value="H=1-625"/>
</dbReference>
<dbReference type="PDB" id="6V92">
    <property type="method" value="EM"/>
    <property type="resolution" value="20.00 A"/>
    <property type="chains" value="H=1-625"/>
</dbReference>
<dbReference type="PDBsum" id="2R0S"/>
<dbReference type="PDBsum" id="2R0V"/>
<dbReference type="PDBsum" id="2R0Y"/>
<dbReference type="PDBsum" id="2R10"/>
<dbReference type="PDBsum" id="6K15"/>
<dbReference type="PDBsum" id="6KW3"/>
<dbReference type="PDBsum" id="6KW4"/>
<dbReference type="PDBsum" id="6KW5"/>
<dbReference type="PDBsum" id="6TDA"/>
<dbReference type="PDBsum" id="6V8O"/>
<dbReference type="PDBsum" id="6V92"/>
<dbReference type="EMDB" id="EMD-0777"/>
<dbReference type="EMDB" id="EMD-0778"/>
<dbReference type="EMDB" id="EMD-0779"/>
<dbReference type="EMDB" id="EMD-10465"/>
<dbReference type="EMDB" id="EMD-21107"/>
<dbReference type="EMDB" id="EMD-21114"/>
<dbReference type="EMDB" id="EMD-9905"/>
<dbReference type="SMR" id="Q02206"/>
<dbReference type="BioGRID" id="34140">
    <property type="interactions" value="350"/>
</dbReference>
<dbReference type="ComplexPortal" id="CPX-1888">
    <property type="entry name" value="RSC chromatin remodelling complex, variant RSC2"/>
</dbReference>
<dbReference type="ComplexPortal" id="CPX-1889">
    <property type="entry name" value="RSC chromatin remodelling complex, variant RSC1"/>
</dbReference>
<dbReference type="DIP" id="DIP-6639N"/>
<dbReference type="FunCoup" id="Q02206">
    <property type="interactions" value="420"/>
</dbReference>
<dbReference type="IntAct" id="Q02206">
    <property type="interactions" value="133"/>
</dbReference>
<dbReference type="MINT" id="Q02206"/>
<dbReference type="STRING" id="4932.YKR008W"/>
<dbReference type="iPTMnet" id="Q02206"/>
<dbReference type="PaxDb" id="4932-YKR008W"/>
<dbReference type="PeptideAtlas" id="Q02206"/>
<dbReference type="EnsemblFungi" id="YKR008W_mRNA">
    <property type="protein sequence ID" value="YKR008W"/>
    <property type="gene ID" value="YKR008W"/>
</dbReference>
<dbReference type="GeneID" id="853877"/>
<dbReference type="KEGG" id="sce:YKR008W"/>
<dbReference type="AGR" id="SGD:S000001716"/>
<dbReference type="SGD" id="S000001716">
    <property type="gene designation" value="RSC4"/>
</dbReference>
<dbReference type="VEuPathDB" id="FungiDB:YKR008W"/>
<dbReference type="eggNOG" id="KOG1827">
    <property type="taxonomic scope" value="Eukaryota"/>
</dbReference>
<dbReference type="GeneTree" id="ENSGT00390000003017"/>
<dbReference type="HOGENOM" id="CLU_441492_0_0_1"/>
<dbReference type="InParanoid" id="Q02206"/>
<dbReference type="OMA" id="HFEGLGN"/>
<dbReference type="OrthoDB" id="1742084at2759"/>
<dbReference type="BioCyc" id="YEAST:G3O-31986-MONOMER"/>
<dbReference type="BioGRID-ORCS" id="853877">
    <property type="hits" value="3 hits in 10 CRISPR screens"/>
</dbReference>
<dbReference type="EvolutionaryTrace" id="Q02206"/>
<dbReference type="PRO" id="PR:Q02206"/>
<dbReference type="Proteomes" id="UP000002311">
    <property type="component" value="Chromosome XI"/>
</dbReference>
<dbReference type="RNAct" id="Q02206">
    <property type="molecule type" value="protein"/>
</dbReference>
<dbReference type="GO" id="GO:0000785">
    <property type="term" value="C:chromatin"/>
    <property type="evidence" value="ECO:0000303"/>
    <property type="project" value="ComplexPortal"/>
</dbReference>
<dbReference type="GO" id="GO:0016586">
    <property type="term" value="C:RSC-type complex"/>
    <property type="evidence" value="ECO:0000314"/>
    <property type="project" value="UniProtKB"/>
</dbReference>
<dbReference type="GO" id="GO:0003682">
    <property type="term" value="F:chromatin binding"/>
    <property type="evidence" value="ECO:0000318"/>
    <property type="project" value="GO_Central"/>
</dbReference>
<dbReference type="GO" id="GO:0140008">
    <property type="term" value="F:histone H4 reader activity"/>
    <property type="evidence" value="ECO:0000314"/>
    <property type="project" value="GO_Central"/>
</dbReference>
<dbReference type="GO" id="GO:0070577">
    <property type="term" value="F:lysine-acetylated histone binding"/>
    <property type="evidence" value="ECO:0000314"/>
    <property type="project" value="SGD"/>
</dbReference>
<dbReference type="GO" id="GO:0006338">
    <property type="term" value="P:chromatin remodeling"/>
    <property type="evidence" value="ECO:0000314"/>
    <property type="project" value="UniProtKB"/>
</dbReference>
<dbReference type="GO" id="GO:0006337">
    <property type="term" value="P:nucleosome disassembly"/>
    <property type="evidence" value="ECO:0000314"/>
    <property type="project" value="SGD"/>
</dbReference>
<dbReference type="GO" id="GO:0006368">
    <property type="term" value="P:transcription elongation by RNA polymerase II"/>
    <property type="evidence" value="ECO:0000314"/>
    <property type="project" value="SGD"/>
</dbReference>
<dbReference type="CDD" id="cd04369">
    <property type="entry name" value="Bromodomain"/>
    <property type="match status" value="2"/>
</dbReference>
<dbReference type="FunFam" id="1.20.920.10:FF:000074">
    <property type="entry name" value="Chromatin structure-remodeling complex subunit RSC4"/>
    <property type="match status" value="1"/>
</dbReference>
<dbReference type="FunFam" id="1.20.920.10:FF:000062">
    <property type="entry name" value="RSC complex member"/>
    <property type="match status" value="1"/>
</dbReference>
<dbReference type="Gene3D" id="1.20.920.10">
    <property type="entry name" value="Bromodomain-like"/>
    <property type="match status" value="2"/>
</dbReference>
<dbReference type="InterPro" id="IPR001487">
    <property type="entry name" value="Bromodomain"/>
</dbReference>
<dbReference type="InterPro" id="IPR036427">
    <property type="entry name" value="Bromodomain-like_sf"/>
</dbReference>
<dbReference type="InterPro" id="IPR018359">
    <property type="entry name" value="Bromodomain_CS"/>
</dbReference>
<dbReference type="InterPro" id="IPR037382">
    <property type="entry name" value="Rsc/polybromo"/>
</dbReference>
<dbReference type="PANTHER" id="PTHR16062:SF13">
    <property type="entry name" value="CHROMATIN STRUCTURE-REMODELING COMPLEX SUBUNIT RSC4"/>
    <property type="match status" value="1"/>
</dbReference>
<dbReference type="PANTHER" id="PTHR16062">
    <property type="entry name" value="SWI/SNF-RELATED"/>
    <property type="match status" value="1"/>
</dbReference>
<dbReference type="Pfam" id="PF00439">
    <property type="entry name" value="Bromodomain"/>
    <property type="match status" value="2"/>
</dbReference>
<dbReference type="Pfam" id="PF24189">
    <property type="entry name" value="Ig_RSC4"/>
    <property type="match status" value="1"/>
</dbReference>
<dbReference type="PRINTS" id="PR00503">
    <property type="entry name" value="BROMODOMAIN"/>
</dbReference>
<dbReference type="SMART" id="SM00297">
    <property type="entry name" value="BROMO"/>
    <property type="match status" value="2"/>
</dbReference>
<dbReference type="SUPFAM" id="SSF47370">
    <property type="entry name" value="Bromodomain"/>
    <property type="match status" value="2"/>
</dbReference>
<dbReference type="PROSITE" id="PS00633">
    <property type="entry name" value="BROMODOMAIN_1"/>
    <property type="match status" value="2"/>
</dbReference>
<dbReference type="PROSITE" id="PS50014">
    <property type="entry name" value="BROMODOMAIN_2"/>
    <property type="match status" value="2"/>
</dbReference>
<protein>
    <recommendedName>
        <fullName>Chromatin structure-remodeling complex subunit RSC4</fullName>
    </recommendedName>
    <alternativeName>
        <fullName>RSC complex subunit RSC4</fullName>
    </alternativeName>
    <alternativeName>
        <fullName>Remodel the structure of chromatin complex subunit 4</fullName>
    </alternativeName>
</protein>
<name>RSC4_YEAST</name>
<comment type="function">
    <text evidence="3 4 5 6 7 10">Component of the chromatin structure remodeling complex (RSC), which is involved in transcription regulation and nucleosome positioning. RSC is responsible for the transfer of a histone octamer from a nucleosome core particle to naked DNA. The reaction requires ATP and involves an activated RSC-nucleosome intermediate. Remodeling reaction also involves DNA translocation, DNA twist and conformational change. As a reconfigurer of centromeric and flanking nucleosomes, RSC complex is required both for proper kinetochore function in chromosome segregation and, via a PKC1-dependent signaling pathway, for organization of the cellular cytoskeleton.</text>
</comment>
<comment type="subunit">
    <text>Component of the two forms of the RSC complex composed of at least either RSC1 or RSC2, and ARP7, ARP9, LDB7, NPL6, RSC3, RSC30, RSC4, RSC58, RSC6, RSC8, RSC9, SFH1, STH1, HTL1 and probably RTT102. The complexes interact with histone and histone variant components of centromeric chromatin.</text>
</comment>
<comment type="interaction">
    <interactant intactId="EBI-16204">
        <id>Q02206</id>
    </interactant>
    <interactant intactId="EBI-12838">
        <id>P39946</id>
        <label>PAC1</label>
    </interactant>
    <organismsDiffer>false</organismsDiffer>
    <experiments>2</experiments>
</comment>
<comment type="subcellular location">
    <subcellularLocation>
        <location evidence="7 8">Nucleus</location>
    </subcellularLocation>
    <text>Localizes to centromeric and flanking chromatin. Association with these loci is dependent on STH1.</text>
</comment>
<comment type="miscellaneous">
    <text evidence="9">Present with 8570 molecules/cell in log phase SD medium.</text>
</comment>
<gene>
    <name type="primary">RSC4</name>
    <name type="ordered locus">YKR008W</name>
    <name type="ORF">YK107</name>
</gene>
<evidence type="ECO:0000255" key="1">
    <source>
        <dbReference type="PROSITE-ProRule" id="PRU00035"/>
    </source>
</evidence>
<evidence type="ECO:0000256" key="2">
    <source>
        <dbReference type="SAM" id="MobiDB-lite"/>
    </source>
</evidence>
<evidence type="ECO:0000269" key="3">
    <source>
    </source>
</evidence>
<evidence type="ECO:0000269" key="4">
    <source>
    </source>
</evidence>
<evidence type="ECO:0000269" key="5">
    <source>
    </source>
</evidence>
<evidence type="ECO:0000269" key="6">
    <source>
    </source>
</evidence>
<evidence type="ECO:0000269" key="7">
    <source>
    </source>
</evidence>
<evidence type="ECO:0000269" key="8">
    <source>
    </source>
</evidence>
<evidence type="ECO:0000269" key="9">
    <source>
    </source>
</evidence>
<evidence type="ECO:0000269" key="10">
    <source>
    </source>
</evidence>
<evidence type="ECO:0000305" key="11"/>
<evidence type="ECO:0007744" key="12">
    <source>
    </source>
</evidence>
<evidence type="ECO:0007744" key="13">
    <source>
    </source>
</evidence>
<evidence type="ECO:0007829" key="14">
    <source>
        <dbReference type="PDB" id="2R0S"/>
    </source>
</evidence>
<evidence type="ECO:0007829" key="15">
    <source>
        <dbReference type="PDB" id="2R0Y"/>
    </source>
</evidence>
<evidence type="ECO:0007829" key="16">
    <source>
        <dbReference type="PDB" id="2R10"/>
    </source>
</evidence>
<evidence type="ECO:0007829" key="17">
    <source>
        <dbReference type="PDB" id="6K15"/>
    </source>
</evidence>
<evidence type="ECO:0007829" key="18">
    <source>
        <dbReference type="PDB" id="6V8O"/>
    </source>
</evidence>
<organism>
    <name type="scientific">Saccharomyces cerevisiae (strain ATCC 204508 / S288c)</name>
    <name type="common">Baker's yeast</name>
    <dbReference type="NCBI Taxonomy" id="559292"/>
    <lineage>
        <taxon>Eukaryota</taxon>
        <taxon>Fungi</taxon>
        <taxon>Dikarya</taxon>
        <taxon>Ascomycota</taxon>
        <taxon>Saccharomycotina</taxon>
        <taxon>Saccharomycetes</taxon>
        <taxon>Saccharomycetales</taxon>
        <taxon>Saccharomycetaceae</taxon>
        <taxon>Saccharomyces</taxon>
    </lineage>
</organism>
<feature type="chain" id="PRO_0000211213" description="Chromatin structure-remodeling complex subunit RSC4">
    <location>
        <begin position="1"/>
        <end position="625"/>
    </location>
</feature>
<feature type="domain" description="Bromo 1" evidence="1">
    <location>
        <begin position="53"/>
        <end position="158"/>
    </location>
</feature>
<feature type="domain" description="Bromo 2" evidence="1">
    <location>
        <begin position="181"/>
        <end position="292"/>
    </location>
</feature>
<feature type="region of interest" description="Disordered" evidence="2">
    <location>
        <begin position="1"/>
        <end position="35"/>
    </location>
</feature>
<feature type="region of interest" description="Disordered" evidence="2">
    <location>
        <begin position="536"/>
        <end position="555"/>
    </location>
</feature>
<feature type="compositionally biased region" description="Polar residues" evidence="2">
    <location>
        <begin position="536"/>
        <end position="552"/>
    </location>
</feature>
<feature type="modified residue" description="Phosphoserine" evidence="13">
    <location>
        <position position="199"/>
    </location>
</feature>
<feature type="modified residue" description="Phosphoserine" evidence="12">
    <location>
        <position position="545"/>
    </location>
</feature>
<feature type="sequence conflict" description="In Ref. 1; CAA46244 and 2; CAA82078." evidence="11" ref="1 2">
    <original>K</original>
    <variation>I</variation>
    <location>
        <position position="390"/>
    </location>
</feature>
<feature type="helix" evidence="15">
    <location>
        <begin position="47"/>
        <end position="50"/>
    </location>
</feature>
<feature type="helix" evidence="15">
    <location>
        <begin position="58"/>
        <end position="72"/>
    </location>
</feature>
<feature type="helix" evidence="15">
    <location>
        <begin position="74"/>
        <end position="77"/>
    </location>
</feature>
<feature type="helix" evidence="15">
    <location>
        <begin position="78"/>
        <end position="80"/>
    </location>
</feature>
<feature type="turn" evidence="15">
    <location>
        <begin position="86"/>
        <end position="88"/>
    </location>
</feature>
<feature type="helix" evidence="15">
    <location>
        <begin position="90"/>
        <end position="95"/>
    </location>
</feature>
<feature type="helix" evidence="15">
    <location>
        <begin position="102"/>
        <end position="107"/>
    </location>
</feature>
<feature type="helix" evidence="15">
    <location>
        <begin position="115"/>
        <end position="133"/>
    </location>
</feature>
<feature type="strand" evidence="16">
    <location>
        <begin position="136"/>
        <end position="138"/>
    </location>
</feature>
<feature type="helix" evidence="15">
    <location>
        <begin position="139"/>
        <end position="159"/>
    </location>
</feature>
<feature type="helix" evidence="15">
    <location>
        <begin position="160"/>
        <end position="163"/>
    </location>
</feature>
<feature type="helix" evidence="15">
    <location>
        <begin position="169"/>
        <end position="184"/>
    </location>
</feature>
<feature type="helix" evidence="15">
    <location>
        <begin position="187"/>
        <end position="195"/>
    </location>
</feature>
<feature type="helix" evidence="15">
    <location>
        <begin position="196"/>
        <end position="198"/>
    </location>
</feature>
<feature type="strand" evidence="14">
    <location>
        <begin position="205"/>
        <end position="207"/>
    </location>
</feature>
<feature type="helix" evidence="15">
    <location>
        <begin position="211"/>
        <end position="213"/>
    </location>
</feature>
<feature type="turn" evidence="15">
    <location>
        <begin position="219"/>
        <end position="221"/>
    </location>
</feature>
<feature type="helix" evidence="15">
    <location>
        <begin position="223"/>
        <end position="228"/>
    </location>
</feature>
<feature type="helix" evidence="15">
    <location>
        <begin position="235"/>
        <end position="244"/>
    </location>
</feature>
<feature type="helix" evidence="15">
    <location>
        <begin position="250"/>
        <end position="267"/>
    </location>
</feature>
<feature type="helix" evidence="15">
    <location>
        <begin position="273"/>
        <end position="291"/>
    </location>
</feature>
<feature type="helix" evidence="15">
    <location>
        <begin position="293"/>
        <end position="302"/>
    </location>
</feature>
<feature type="turn" evidence="15">
    <location>
        <begin position="313"/>
        <end position="318"/>
    </location>
</feature>
<feature type="helix" evidence="17">
    <location>
        <begin position="366"/>
        <end position="368"/>
    </location>
</feature>
<feature type="strand" evidence="17">
    <location>
        <begin position="375"/>
        <end position="377"/>
    </location>
</feature>
<feature type="helix" evidence="17">
    <location>
        <begin position="382"/>
        <end position="389"/>
    </location>
</feature>
<feature type="strand" evidence="17">
    <location>
        <begin position="435"/>
        <end position="440"/>
    </location>
</feature>
<feature type="strand" evidence="17">
    <location>
        <begin position="442"/>
        <end position="445"/>
    </location>
</feature>
<feature type="strand" evidence="18">
    <location>
        <begin position="449"/>
        <end position="458"/>
    </location>
</feature>
<feature type="helix" evidence="18">
    <location>
        <begin position="460"/>
        <end position="467"/>
    </location>
</feature>
<feature type="turn" evidence="18">
    <location>
        <begin position="470"/>
        <end position="472"/>
    </location>
</feature>
<feature type="strand" evidence="18">
    <location>
        <begin position="480"/>
        <end position="486"/>
    </location>
</feature>
<feature type="helix" evidence="17">
    <location>
        <begin position="488"/>
        <end position="490"/>
    </location>
</feature>
<feature type="strand" evidence="18">
    <location>
        <begin position="497"/>
        <end position="502"/>
    </location>
</feature>
<feature type="strand" evidence="18">
    <location>
        <begin position="508"/>
        <end position="516"/>
    </location>
</feature>
<feature type="strand" evidence="18">
    <location>
        <begin position="522"/>
        <end position="530"/>
    </location>
</feature>
<feature type="strand" evidence="18">
    <location>
        <begin position="589"/>
        <end position="594"/>
    </location>
</feature>
<feature type="strand" evidence="18">
    <location>
        <begin position="597"/>
        <end position="607"/>
    </location>
</feature>
<feature type="strand" evidence="18">
    <location>
        <begin position="609"/>
        <end position="611"/>
    </location>
</feature>
<feature type="strand" evidence="18">
    <location>
        <begin position="614"/>
        <end position="623"/>
    </location>
</feature>
<keyword id="KW-0002">3D-structure</keyword>
<keyword id="KW-0103">Bromodomain</keyword>
<keyword id="KW-0156">Chromatin regulator</keyword>
<keyword id="KW-0539">Nucleus</keyword>
<keyword id="KW-0597">Phosphoprotein</keyword>
<keyword id="KW-1185">Reference proteome</keyword>
<keyword id="KW-0677">Repeat</keyword>
<keyword id="KW-0804">Transcription</keyword>
<keyword id="KW-0805">Transcription regulation</keyword>
<accession>Q02206</accession>
<accession>D6VX74</accession>
<accession>Q6B1F7</accession>